<comment type="function">
    <text evidence="1">Hydrolyzes ribosome-free peptidyl-tRNAs (with 1 or more amino acids incorporated), which drop off the ribosome during protein synthesis, or as a result of ribosome stalling.</text>
</comment>
<comment type="function">
    <text evidence="1">Catalyzes the release of premature peptidyl moieties from peptidyl-tRNA molecules trapped in stalled 50S ribosomal subunits, and thus maintains levels of free tRNAs and 50S ribosomes.</text>
</comment>
<comment type="catalytic activity">
    <reaction evidence="1">
        <text>an N-acyl-L-alpha-aminoacyl-tRNA + H2O = an N-acyl-L-amino acid + a tRNA + H(+)</text>
        <dbReference type="Rhea" id="RHEA:54448"/>
        <dbReference type="Rhea" id="RHEA-COMP:10123"/>
        <dbReference type="Rhea" id="RHEA-COMP:13883"/>
        <dbReference type="ChEBI" id="CHEBI:15377"/>
        <dbReference type="ChEBI" id="CHEBI:15378"/>
        <dbReference type="ChEBI" id="CHEBI:59874"/>
        <dbReference type="ChEBI" id="CHEBI:78442"/>
        <dbReference type="ChEBI" id="CHEBI:138191"/>
        <dbReference type="EC" id="3.1.1.29"/>
    </reaction>
</comment>
<comment type="subunit">
    <text evidence="1">Monomer.</text>
</comment>
<comment type="subcellular location">
    <subcellularLocation>
        <location evidence="1">Cytoplasm</location>
    </subcellularLocation>
</comment>
<comment type="similarity">
    <text evidence="1">Belongs to the PTH family.</text>
</comment>
<reference key="1">
    <citation type="journal article" date="2007" name="J. Bacteriol.">
        <title>The complete genome sequence of Roseobacter denitrificans reveals a mixotrophic rather than photosynthetic metabolism.</title>
        <authorList>
            <person name="Swingley W.D."/>
            <person name="Sadekar S."/>
            <person name="Mastrian S.D."/>
            <person name="Matthies H.J."/>
            <person name="Hao J."/>
            <person name="Ramos H."/>
            <person name="Acharya C.R."/>
            <person name="Conrad A.L."/>
            <person name="Taylor H.L."/>
            <person name="Dejesa L.C."/>
            <person name="Shah M.K."/>
            <person name="O'Huallachain M.E."/>
            <person name="Lince M.T."/>
            <person name="Blankenship R.E."/>
            <person name="Beatty J.T."/>
            <person name="Touchman J.W."/>
        </authorList>
    </citation>
    <scope>NUCLEOTIDE SEQUENCE [LARGE SCALE GENOMIC DNA]</scope>
    <source>
        <strain>ATCC 33942 / OCh 114</strain>
    </source>
</reference>
<evidence type="ECO:0000255" key="1">
    <source>
        <dbReference type="HAMAP-Rule" id="MF_00083"/>
    </source>
</evidence>
<evidence type="ECO:0000256" key="2">
    <source>
        <dbReference type="SAM" id="MobiDB-lite"/>
    </source>
</evidence>
<name>PTH_ROSDO</name>
<feature type="chain" id="PRO_0000264098" description="Peptidyl-tRNA hydrolase">
    <location>
        <begin position="1"/>
        <end position="233"/>
    </location>
</feature>
<feature type="region of interest" description="Disordered" evidence="2">
    <location>
        <begin position="187"/>
        <end position="233"/>
    </location>
</feature>
<feature type="active site" description="Proton acceptor" evidence="1">
    <location>
        <position position="19"/>
    </location>
</feature>
<feature type="binding site" evidence="1">
    <location>
        <position position="14"/>
    </location>
    <ligand>
        <name>tRNA</name>
        <dbReference type="ChEBI" id="CHEBI:17843"/>
    </ligand>
</feature>
<feature type="binding site" evidence="1">
    <location>
        <position position="64"/>
    </location>
    <ligand>
        <name>tRNA</name>
        <dbReference type="ChEBI" id="CHEBI:17843"/>
    </ligand>
</feature>
<feature type="binding site" evidence="1">
    <location>
        <position position="66"/>
    </location>
    <ligand>
        <name>tRNA</name>
        <dbReference type="ChEBI" id="CHEBI:17843"/>
    </ligand>
</feature>
<feature type="binding site" evidence="1">
    <location>
        <position position="112"/>
    </location>
    <ligand>
        <name>tRNA</name>
        <dbReference type="ChEBI" id="CHEBI:17843"/>
    </ligand>
</feature>
<feature type="site" description="Discriminates between blocked and unblocked aminoacyl-tRNA" evidence="1">
    <location>
        <position position="9"/>
    </location>
</feature>
<feature type="site" description="Stabilizes the basic form of H active site to accept a proton" evidence="1">
    <location>
        <position position="91"/>
    </location>
</feature>
<dbReference type="EC" id="3.1.1.29" evidence="1"/>
<dbReference type="EMBL" id="CP000362">
    <property type="protein sequence ID" value="ABG33359.1"/>
    <property type="molecule type" value="Genomic_DNA"/>
</dbReference>
<dbReference type="RefSeq" id="WP_011569970.1">
    <property type="nucleotide sequence ID" value="NC_008209.1"/>
</dbReference>
<dbReference type="SMR" id="Q161I4"/>
<dbReference type="STRING" id="375451.RD1_3900"/>
<dbReference type="KEGG" id="rde:RD1_3900"/>
<dbReference type="eggNOG" id="COG0193">
    <property type="taxonomic scope" value="Bacteria"/>
</dbReference>
<dbReference type="HOGENOM" id="CLU_062456_1_0_5"/>
<dbReference type="OrthoDB" id="9800507at2"/>
<dbReference type="Proteomes" id="UP000007029">
    <property type="component" value="Chromosome"/>
</dbReference>
<dbReference type="GO" id="GO:0005737">
    <property type="term" value="C:cytoplasm"/>
    <property type="evidence" value="ECO:0007669"/>
    <property type="project" value="UniProtKB-SubCell"/>
</dbReference>
<dbReference type="GO" id="GO:0004045">
    <property type="term" value="F:peptidyl-tRNA hydrolase activity"/>
    <property type="evidence" value="ECO:0007669"/>
    <property type="project" value="UniProtKB-UniRule"/>
</dbReference>
<dbReference type="GO" id="GO:0000049">
    <property type="term" value="F:tRNA binding"/>
    <property type="evidence" value="ECO:0007669"/>
    <property type="project" value="UniProtKB-UniRule"/>
</dbReference>
<dbReference type="GO" id="GO:0006515">
    <property type="term" value="P:protein quality control for misfolded or incompletely synthesized proteins"/>
    <property type="evidence" value="ECO:0007669"/>
    <property type="project" value="UniProtKB-UniRule"/>
</dbReference>
<dbReference type="GO" id="GO:0072344">
    <property type="term" value="P:rescue of stalled ribosome"/>
    <property type="evidence" value="ECO:0007669"/>
    <property type="project" value="UniProtKB-UniRule"/>
</dbReference>
<dbReference type="CDD" id="cd00462">
    <property type="entry name" value="PTH"/>
    <property type="match status" value="1"/>
</dbReference>
<dbReference type="FunFam" id="3.40.50.1470:FF:000001">
    <property type="entry name" value="Peptidyl-tRNA hydrolase"/>
    <property type="match status" value="1"/>
</dbReference>
<dbReference type="Gene3D" id="3.40.50.1470">
    <property type="entry name" value="Peptidyl-tRNA hydrolase"/>
    <property type="match status" value="1"/>
</dbReference>
<dbReference type="HAMAP" id="MF_00083">
    <property type="entry name" value="Pept_tRNA_hydro_bact"/>
    <property type="match status" value="1"/>
</dbReference>
<dbReference type="InterPro" id="IPR001328">
    <property type="entry name" value="Pept_tRNA_hydro"/>
</dbReference>
<dbReference type="InterPro" id="IPR018171">
    <property type="entry name" value="Pept_tRNA_hydro_CS"/>
</dbReference>
<dbReference type="InterPro" id="IPR036416">
    <property type="entry name" value="Pept_tRNA_hydro_sf"/>
</dbReference>
<dbReference type="NCBIfam" id="TIGR00447">
    <property type="entry name" value="pth"/>
    <property type="match status" value="1"/>
</dbReference>
<dbReference type="PANTHER" id="PTHR17224">
    <property type="entry name" value="PEPTIDYL-TRNA HYDROLASE"/>
    <property type="match status" value="1"/>
</dbReference>
<dbReference type="PANTHER" id="PTHR17224:SF1">
    <property type="entry name" value="PEPTIDYL-TRNA HYDROLASE"/>
    <property type="match status" value="1"/>
</dbReference>
<dbReference type="Pfam" id="PF01195">
    <property type="entry name" value="Pept_tRNA_hydro"/>
    <property type="match status" value="1"/>
</dbReference>
<dbReference type="SUPFAM" id="SSF53178">
    <property type="entry name" value="Peptidyl-tRNA hydrolase-like"/>
    <property type="match status" value="1"/>
</dbReference>
<dbReference type="PROSITE" id="PS01196">
    <property type="entry name" value="PEPT_TRNA_HYDROL_2"/>
    <property type="match status" value="1"/>
</dbReference>
<gene>
    <name evidence="1" type="primary">pth</name>
    <name type="ordered locus">RD1_3900</name>
</gene>
<organism>
    <name type="scientific">Roseobacter denitrificans (strain ATCC 33942 / OCh 114)</name>
    <name type="common">Erythrobacter sp. (strain OCh 114)</name>
    <name type="synonym">Roseobacter denitrificans</name>
    <dbReference type="NCBI Taxonomy" id="375451"/>
    <lineage>
        <taxon>Bacteria</taxon>
        <taxon>Pseudomonadati</taxon>
        <taxon>Pseudomonadota</taxon>
        <taxon>Alphaproteobacteria</taxon>
        <taxon>Rhodobacterales</taxon>
        <taxon>Roseobacteraceae</taxon>
        <taxon>Roseobacter</taxon>
    </lineage>
</organism>
<accession>Q161I4</accession>
<protein>
    <recommendedName>
        <fullName evidence="1">Peptidyl-tRNA hydrolase</fullName>
        <shortName evidence="1">Pth</shortName>
        <ecNumber evidence="1">3.1.1.29</ecNumber>
    </recommendedName>
</protein>
<sequence length="233" mass="25266">MKLIVGLGNPGPKYAGHRHNIGFMALDRIAADHGFGAWKDKHQGSLSEGRFGSDRAVLLKPLTFMNNSGQSVQAAMRFYKLEPEDVIVLHDEIDLAPGKVKYKTGGGHAGHNGLRSIHAHIGPEYARVRLGVGHPGHKDRVPGYVLHDFAKADQDWLDDVLRGVSDGAPFLATTEAAKFSNAVALRVSPRRSGTGQKGKDKPPAPAKQQATATKAEPEPDTRSALQKLMERFK</sequence>
<proteinExistence type="inferred from homology"/>
<keyword id="KW-0963">Cytoplasm</keyword>
<keyword id="KW-0378">Hydrolase</keyword>
<keyword id="KW-1185">Reference proteome</keyword>
<keyword id="KW-0694">RNA-binding</keyword>
<keyword id="KW-0820">tRNA-binding</keyword>